<gene>
    <name evidence="1" type="primary">groES</name>
    <name evidence="1" type="synonym">groS</name>
    <name type="ordered locus">Bpet3931</name>
</gene>
<evidence type="ECO:0000255" key="1">
    <source>
        <dbReference type="HAMAP-Rule" id="MF_00580"/>
    </source>
</evidence>
<sequence>MALRPLHDRVIVKRLDNERKTASGIVIPDSAAEKPDQGEVVAVGPGKKTEDGKVLPVDLKAGDKVLFGKYAGQSVKVDGEELLVIREEEILAVIQ</sequence>
<organism>
    <name type="scientific">Bordetella petrii (strain ATCC BAA-461 / DSM 12804 / CCUG 43448)</name>
    <dbReference type="NCBI Taxonomy" id="340100"/>
    <lineage>
        <taxon>Bacteria</taxon>
        <taxon>Pseudomonadati</taxon>
        <taxon>Pseudomonadota</taxon>
        <taxon>Betaproteobacteria</taxon>
        <taxon>Burkholderiales</taxon>
        <taxon>Alcaligenaceae</taxon>
        <taxon>Bordetella</taxon>
    </lineage>
</organism>
<accession>A9I682</accession>
<reference key="1">
    <citation type="journal article" date="2008" name="BMC Genomics">
        <title>The missing link: Bordetella petrii is endowed with both the metabolic versatility of environmental bacteria and virulence traits of pathogenic Bordetellae.</title>
        <authorList>
            <person name="Gross R."/>
            <person name="Guzman C.A."/>
            <person name="Sebaihia M."/>
            <person name="Martin dos Santos V.A.P."/>
            <person name="Pieper D.H."/>
            <person name="Koebnik R."/>
            <person name="Lechner M."/>
            <person name="Bartels D."/>
            <person name="Buhrmester J."/>
            <person name="Choudhuri J.V."/>
            <person name="Ebensen T."/>
            <person name="Gaigalat L."/>
            <person name="Herrmann S."/>
            <person name="Khachane A.N."/>
            <person name="Larisch C."/>
            <person name="Link S."/>
            <person name="Linke B."/>
            <person name="Meyer F."/>
            <person name="Mormann S."/>
            <person name="Nakunst D."/>
            <person name="Rueckert C."/>
            <person name="Schneiker-Bekel S."/>
            <person name="Schulze K."/>
            <person name="Voerholter F.-J."/>
            <person name="Yevsa T."/>
            <person name="Engle J.T."/>
            <person name="Goldman W.E."/>
            <person name="Puehler A."/>
            <person name="Goebel U.B."/>
            <person name="Goesmann A."/>
            <person name="Bloecker H."/>
            <person name="Kaiser O."/>
            <person name="Martinez-Arias R."/>
        </authorList>
    </citation>
    <scope>NUCLEOTIDE SEQUENCE [LARGE SCALE GENOMIC DNA]</scope>
    <source>
        <strain>ATCC BAA-461 / DSM 12804 / CCUG 43448</strain>
    </source>
</reference>
<feature type="chain" id="PRO_1000129630" description="Co-chaperonin GroES">
    <location>
        <begin position="1"/>
        <end position="95"/>
    </location>
</feature>
<name>CH10_BORPD</name>
<comment type="function">
    <text evidence="1">Together with the chaperonin GroEL, plays an essential role in assisting protein folding. The GroEL-GroES system forms a nano-cage that allows encapsulation of the non-native substrate proteins and provides a physical environment optimized to promote and accelerate protein folding. GroES binds to the apical surface of the GroEL ring, thereby capping the opening of the GroEL channel.</text>
</comment>
<comment type="subunit">
    <text evidence="1">Heptamer of 7 subunits arranged in a ring. Interacts with the chaperonin GroEL.</text>
</comment>
<comment type="subcellular location">
    <subcellularLocation>
        <location evidence="1">Cytoplasm</location>
    </subcellularLocation>
</comment>
<comment type="similarity">
    <text evidence="1">Belongs to the GroES chaperonin family.</text>
</comment>
<protein>
    <recommendedName>
        <fullName evidence="1">Co-chaperonin GroES</fullName>
    </recommendedName>
    <alternativeName>
        <fullName evidence="1">10 kDa chaperonin</fullName>
    </alternativeName>
    <alternativeName>
        <fullName evidence="1">Chaperonin-10</fullName>
        <shortName evidence="1">Cpn10</shortName>
    </alternativeName>
</protein>
<dbReference type="EMBL" id="AM902716">
    <property type="protein sequence ID" value="CAP44277.1"/>
    <property type="molecule type" value="Genomic_DNA"/>
</dbReference>
<dbReference type="SMR" id="A9I682"/>
<dbReference type="STRING" id="94624.Bpet3931"/>
<dbReference type="KEGG" id="bpt:Bpet3931"/>
<dbReference type="eggNOG" id="COG0234">
    <property type="taxonomic scope" value="Bacteria"/>
</dbReference>
<dbReference type="Proteomes" id="UP000001225">
    <property type="component" value="Chromosome"/>
</dbReference>
<dbReference type="GO" id="GO:0005737">
    <property type="term" value="C:cytoplasm"/>
    <property type="evidence" value="ECO:0007669"/>
    <property type="project" value="UniProtKB-SubCell"/>
</dbReference>
<dbReference type="GO" id="GO:0005524">
    <property type="term" value="F:ATP binding"/>
    <property type="evidence" value="ECO:0007669"/>
    <property type="project" value="InterPro"/>
</dbReference>
<dbReference type="GO" id="GO:0046872">
    <property type="term" value="F:metal ion binding"/>
    <property type="evidence" value="ECO:0007669"/>
    <property type="project" value="TreeGrafter"/>
</dbReference>
<dbReference type="GO" id="GO:0044183">
    <property type="term" value="F:protein folding chaperone"/>
    <property type="evidence" value="ECO:0007669"/>
    <property type="project" value="InterPro"/>
</dbReference>
<dbReference type="GO" id="GO:0051087">
    <property type="term" value="F:protein-folding chaperone binding"/>
    <property type="evidence" value="ECO:0007669"/>
    <property type="project" value="TreeGrafter"/>
</dbReference>
<dbReference type="GO" id="GO:0051082">
    <property type="term" value="F:unfolded protein binding"/>
    <property type="evidence" value="ECO:0007669"/>
    <property type="project" value="TreeGrafter"/>
</dbReference>
<dbReference type="GO" id="GO:0051085">
    <property type="term" value="P:chaperone cofactor-dependent protein refolding"/>
    <property type="evidence" value="ECO:0007669"/>
    <property type="project" value="TreeGrafter"/>
</dbReference>
<dbReference type="CDD" id="cd00320">
    <property type="entry name" value="cpn10"/>
    <property type="match status" value="1"/>
</dbReference>
<dbReference type="FunFam" id="2.30.33.40:FF:000001">
    <property type="entry name" value="10 kDa chaperonin"/>
    <property type="match status" value="1"/>
</dbReference>
<dbReference type="Gene3D" id="2.30.33.40">
    <property type="entry name" value="GroES chaperonin"/>
    <property type="match status" value="1"/>
</dbReference>
<dbReference type="HAMAP" id="MF_00580">
    <property type="entry name" value="CH10"/>
    <property type="match status" value="1"/>
</dbReference>
<dbReference type="InterPro" id="IPR020818">
    <property type="entry name" value="Chaperonin_GroES"/>
</dbReference>
<dbReference type="InterPro" id="IPR037124">
    <property type="entry name" value="Chaperonin_GroES_sf"/>
</dbReference>
<dbReference type="InterPro" id="IPR018369">
    <property type="entry name" value="Chaprnonin_Cpn10_CS"/>
</dbReference>
<dbReference type="InterPro" id="IPR011032">
    <property type="entry name" value="GroES-like_sf"/>
</dbReference>
<dbReference type="NCBIfam" id="NF001527">
    <property type="entry name" value="PRK00364.1-2"/>
    <property type="match status" value="1"/>
</dbReference>
<dbReference type="NCBIfam" id="NF001529">
    <property type="entry name" value="PRK00364.1-5"/>
    <property type="match status" value="1"/>
</dbReference>
<dbReference type="NCBIfam" id="NF001531">
    <property type="entry name" value="PRK00364.2-2"/>
    <property type="match status" value="1"/>
</dbReference>
<dbReference type="NCBIfam" id="NF001533">
    <property type="entry name" value="PRK00364.2-4"/>
    <property type="match status" value="1"/>
</dbReference>
<dbReference type="NCBIfam" id="NF001534">
    <property type="entry name" value="PRK00364.2-5"/>
    <property type="match status" value="1"/>
</dbReference>
<dbReference type="PANTHER" id="PTHR10772">
    <property type="entry name" value="10 KDA HEAT SHOCK PROTEIN"/>
    <property type="match status" value="1"/>
</dbReference>
<dbReference type="PANTHER" id="PTHR10772:SF58">
    <property type="entry name" value="CO-CHAPERONIN GROES"/>
    <property type="match status" value="1"/>
</dbReference>
<dbReference type="Pfam" id="PF00166">
    <property type="entry name" value="Cpn10"/>
    <property type="match status" value="1"/>
</dbReference>
<dbReference type="PRINTS" id="PR00297">
    <property type="entry name" value="CHAPERONIN10"/>
</dbReference>
<dbReference type="SMART" id="SM00883">
    <property type="entry name" value="Cpn10"/>
    <property type="match status" value="1"/>
</dbReference>
<dbReference type="SUPFAM" id="SSF50129">
    <property type="entry name" value="GroES-like"/>
    <property type="match status" value="1"/>
</dbReference>
<dbReference type="PROSITE" id="PS00681">
    <property type="entry name" value="CHAPERONINS_CPN10"/>
    <property type="match status" value="1"/>
</dbReference>
<keyword id="KW-0143">Chaperone</keyword>
<keyword id="KW-0963">Cytoplasm</keyword>
<proteinExistence type="inferred from homology"/>